<dbReference type="EMBL" id="AE005674">
    <property type="protein sequence ID" value="AAN44677.1"/>
    <property type="molecule type" value="Genomic_DNA"/>
</dbReference>
<dbReference type="EMBL" id="AE014073">
    <property type="protein sequence ID" value="AAP18491.1"/>
    <property type="molecule type" value="Genomic_DNA"/>
</dbReference>
<dbReference type="RefSeq" id="NP_708970.1">
    <property type="nucleotide sequence ID" value="NC_004337.2"/>
</dbReference>
<dbReference type="RefSeq" id="WP_001031057.1">
    <property type="nucleotide sequence ID" value="NZ_WPGW01000004.1"/>
</dbReference>
<dbReference type="BMRB" id="P0AFF9"/>
<dbReference type="SMR" id="P0AFF9"/>
<dbReference type="STRING" id="198214.SF3210"/>
<dbReference type="PaxDb" id="198214-SF3210"/>
<dbReference type="GeneID" id="1027147"/>
<dbReference type="GeneID" id="93778814"/>
<dbReference type="KEGG" id="sfl:SF3210"/>
<dbReference type="KEGG" id="sfx:S3427"/>
<dbReference type="PATRIC" id="fig|198214.7.peg.3810"/>
<dbReference type="HOGENOM" id="CLU_029242_0_0_6"/>
<dbReference type="Proteomes" id="UP000001006">
    <property type="component" value="Chromosome"/>
</dbReference>
<dbReference type="Proteomes" id="UP000002673">
    <property type="component" value="Chromosome"/>
</dbReference>
<dbReference type="GO" id="GO:0005829">
    <property type="term" value="C:cytosol"/>
    <property type="evidence" value="ECO:0007669"/>
    <property type="project" value="TreeGrafter"/>
</dbReference>
<dbReference type="GO" id="GO:0003700">
    <property type="term" value="F:DNA-binding transcription factor activity"/>
    <property type="evidence" value="ECO:0007669"/>
    <property type="project" value="InterPro"/>
</dbReference>
<dbReference type="GO" id="GO:0000166">
    <property type="term" value="F:nucleotide binding"/>
    <property type="evidence" value="ECO:0007669"/>
    <property type="project" value="InterPro"/>
</dbReference>
<dbReference type="GO" id="GO:0003723">
    <property type="term" value="F:RNA binding"/>
    <property type="evidence" value="ECO:0007669"/>
    <property type="project" value="UniProtKB-UniRule"/>
</dbReference>
<dbReference type="GO" id="GO:0006353">
    <property type="term" value="P:DNA-templated transcription termination"/>
    <property type="evidence" value="ECO:0007669"/>
    <property type="project" value="UniProtKB-UniRule"/>
</dbReference>
<dbReference type="GO" id="GO:0031564">
    <property type="term" value="P:transcription antitermination"/>
    <property type="evidence" value="ECO:0007669"/>
    <property type="project" value="UniProtKB-UniRule"/>
</dbReference>
<dbReference type="CDD" id="cd02134">
    <property type="entry name" value="KH-II_NusA_rpt1"/>
    <property type="match status" value="1"/>
</dbReference>
<dbReference type="CDD" id="cd22529">
    <property type="entry name" value="KH-II_NusA_rpt2"/>
    <property type="match status" value="1"/>
</dbReference>
<dbReference type="CDD" id="cd04455">
    <property type="entry name" value="S1_NusA"/>
    <property type="match status" value="1"/>
</dbReference>
<dbReference type="FunFam" id="1.10.150.20:FF:000015">
    <property type="entry name" value="Transcription termination/antitermination protein NusA"/>
    <property type="match status" value="1"/>
</dbReference>
<dbReference type="FunFam" id="1.10.150.20:FF:000018">
    <property type="entry name" value="Transcription termination/antitermination protein NusA"/>
    <property type="match status" value="1"/>
</dbReference>
<dbReference type="FunFam" id="2.40.50.140:FF:000092">
    <property type="entry name" value="Transcription termination/antitermination protein NusA"/>
    <property type="match status" value="1"/>
</dbReference>
<dbReference type="FunFam" id="3.30.1480.10:FF:000001">
    <property type="entry name" value="Transcription termination/antitermination protein NusA"/>
    <property type="match status" value="1"/>
</dbReference>
<dbReference type="FunFam" id="3.30.300.20:FF:000002">
    <property type="entry name" value="Transcription termination/antitermination protein NusA"/>
    <property type="match status" value="1"/>
</dbReference>
<dbReference type="FunFam" id="3.30.300.20:FF:000005">
    <property type="entry name" value="Transcription termination/antitermination protein NusA"/>
    <property type="match status" value="1"/>
</dbReference>
<dbReference type="Gene3D" id="3.30.300.20">
    <property type="match status" value="2"/>
</dbReference>
<dbReference type="Gene3D" id="1.10.150.20">
    <property type="entry name" value="5' to 3' exonuclease, C-terminal subdomain"/>
    <property type="match status" value="2"/>
</dbReference>
<dbReference type="Gene3D" id="2.40.50.140">
    <property type="entry name" value="Nucleic acid-binding proteins"/>
    <property type="match status" value="1"/>
</dbReference>
<dbReference type="Gene3D" id="3.30.1480.10">
    <property type="entry name" value="NusA, N-terminal domain"/>
    <property type="match status" value="1"/>
</dbReference>
<dbReference type="HAMAP" id="MF_00945_B">
    <property type="entry name" value="NusA_B"/>
    <property type="match status" value="1"/>
</dbReference>
<dbReference type="InterPro" id="IPR010995">
    <property type="entry name" value="DNA_repair_Rad51/TF_NusA_a-hlx"/>
</dbReference>
<dbReference type="InterPro" id="IPR015946">
    <property type="entry name" value="KH_dom-like_a/b"/>
</dbReference>
<dbReference type="InterPro" id="IPR025249">
    <property type="entry name" value="KH_dom_NusA-like"/>
</dbReference>
<dbReference type="InterPro" id="IPR009019">
    <property type="entry name" value="KH_sf_prok-type"/>
</dbReference>
<dbReference type="InterPro" id="IPR012340">
    <property type="entry name" value="NA-bd_OB-fold"/>
</dbReference>
<dbReference type="InterPro" id="IPR030842">
    <property type="entry name" value="NusA_bac"/>
</dbReference>
<dbReference type="InterPro" id="IPR036555">
    <property type="entry name" value="NusA_N_sf"/>
</dbReference>
<dbReference type="InterPro" id="IPR003029">
    <property type="entry name" value="S1_domain"/>
</dbReference>
<dbReference type="InterPro" id="IPR013735">
    <property type="entry name" value="TF_NusA_N"/>
</dbReference>
<dbReference type="InterPro" id="IPR010214">
    <property type="entry name" value="Tscrpt_termin_fac_NusA_C_rpt"/>
</dbReference>
<dbReference type="InterPro" id="IPR010213">
    <property type="entry name" value="Tscrpt_termination_fac_NusA"/>
</dbReference>
<dbReference type="NCBIfam" id="TIGR01953">
    <property type="entry name" value="NusA"/>
    <property type="match status" value="1"/>
</dbReference>
<dbReference type="NCBIfam" id="TIGR01954">
    <property type="entry name" value="nusA_Cterm_rpt"/>
    <property type="match status" value="2"/>
</dbReference>
<dbReference type="PANTHER" id="PTHR22648">
    <property type="entry name" value="TRANSCRIPTION TERMINATION FACTOR NUSA"/>
    <property type="match status" value="1"/>
</dbReference>
<dbReference type="PANTHER" id="PTHR22648:SF0">
    <property type="entry name" value="TRANSCRIPTION TERMINATION_ANTITERMINATION PROTEIN NUSA"/>
    <property type="match status" value="1"/>
</dbReference>
<dbReference type="Pfam" id="PF14520">
    <property type="entry name" value="HHH_5"/>
    <property type="match status" value="1"/>
</dbReference>
<dbReference type="Pfam" id="PF13184">
    <property type="entry name" value="KH_5"/>
    <property type="match status" value="1"/>
</dbReference>
<dbReference type="Pfam" id="PF08529">
    <property type="entry name" value="NusA_N"/>
    <property type="match status" value="1"/>
</dbReference>
<dbReference type="Pfam" id="PF00575">
    <property type="entry name" value="S1"/>
    <property type="match status" value="1"/>
</dbReference>
<dbReference type="SMART" id="SM00316">
    <property type="entry name" value="S1"/>
    <property type="match status" value="1"/>
</dbReference>
<dbReference type="SUPFAM" id="SSF50249">
    <property type="entry name" value="Nucleic acid-binding proteins"/>
    <property type="match status" value="1"/>
</dbReference>
<dbReference type="SUPFAM" id="SSF54814">
    <property type="entry name" value="Prokaryotic type KH domain (KH-domain type II)"/>
    <property type="match status" value="2"/>
</dbReference>
<dbReference type="SUPFAM" id="SSF47794">
    <property type="entry name" value="Rad51 N-terminal domain-like"/>
    <property type="match status" value="2"/>
</dbReference>
<dbReference type="SUPFAM" id="SSF69705">
    <property type="entry name" value="Transcription factor NusA, N-terminal domain"/>
    <property type="match status" value="1"/>
</dbReference>
<dbReference type="PROSITE" id="PS50084">
    <property type="entry name" value="KH_TYPE_1"/>
    <property type="match status" value="1"/>
</dbReference>
<dbReference type="PROSITE" id="PS50126">
    <property type="entry name" value="S1"/>
    <property type="match status" value="1"/>
</dbReference>
<keyword id="KW-0963">Cytoplasm</keyword>
<keyword id="KW-1185">Reference proteome</keyword>
<keyword id="KW-0677">Repeat</keyword>
<keyword id="KW-0694">RNA-binding</keyword>
<keyword id="KW-0804">Transcription</keyword>
<keyword id="KW-0889">Transcription antitermination</keyword>
<keyword id="KW-0805">Transcription regulation</keyword>
<keyword id="KW-0806">Transcription termination</keyword>
<sequence length="495" mass="54871">MNKEILAVVEAVSNEKALPREKIFEALESALATATKKKYEQEIDVRVQIDRKSGDFDTFRRWLVVDEVTQPTKEITLEAARYEDESLNLGDYVEDQIESVTFDRITTQTAKQVIVQKVREAERAMVVDQFREHEGEIITGVVKKVNRDNISLDLGNNAEAVILREDMLPRENFRPGDRVRGVLYSVRPEARGAQLFVTRSKPEMLIELFRIEVPEIGEEVIEIKAAARDPGSRAKIAVKTNDKRIDPVGACVGMRGARVQAVSTELGGERIDIVLWDDNPAQFVINAMAPADVASIVVDEDKHTMDIAVEAGNLAQAIGRNGQNVRLASQLSGWELNVMTVDDLQAKHQAEAHAAIDTFTKYLDIDEDFATVLVEEGFSTLEELAYVPMKELLEIEGLDEPTVEALRERAKNALATIAQAQEESLGDNKPADDLLNLEGVDRDLAFKLAARGVCTLEDLAEQGIDDLADIEGLTDEKAGALIMAARNICWFGDEA</sequence>
<protein>
    <recommendedName>
        <fullName evidence="1">Transcription termination/antitermination protein NusA</fullName>
    </recommendedName>
</protein>
<feature type="chain" id="PRO_0000181979" description="Transcription termination/antitermination protein NusA">
    <location>
        <begin position="1"/>
        <end position="495"/>
    </location>
</feature>
<feature type="domain" description="S1 motif" evidence="1">
    <location>
        <begin position="135"/>
        <end position="200"/>
    </location>
</feature>
<feature type="domain" description="KH" evidence="1">
    <location>
        <begin position="302"/>
        <end position="368"/>
    </location>
</feature>
<feature type="repeat" description="1">
    <location>
        <begin position="364"/>
        <end position="414"/>
    </location>
</feature>
<feature type="repeat" description="2">
    <location>
        <begin position="439"/>
        <end position="489"/>
    </location>
</feature>
<feature type="region of interest" description="2 X 51 AA approximate repeats">
    <location>
        <begin position="364"/>
        <end position="489"/>
    </location>
</feature>
<proteinExistence type="inferred from homology"/>
<comment type="function">
    <text evidence="1">Participates in both transcription termination and antitermination.</text>
</comment>
<comment type="subunit">
    <text evidence="1">Monomer. Binds directly to the core enzyme of the DNA-dependent RNA polymerase and to nascent RNA.</text>
</comment>
<comment type="subcellular location">
    <subcellularLocation>
        <location evidence="1">Cytoplasm</location>
    </subcellularLocation>
</comment>
<comment type="similarity">
    <text evidence="1">Belongs to the NusA family.</text>
</comment>
<organism>
    <name type="scientific">Shigella flexneri</name>
    <dbReference type="NCBI Taxonomy" id="623"/>
    <lineage>
        <taxon>Bacteria</taxon>
        <taxon>Pseudomonadati</taxon>
        <taxon>Pseudomonadota</taxon>
        <taxon>Gammaproteobacteria</taxon>
        <taxon>Enterobacterales</taxon>
        <taxon>Enterobacteriaceae</taxon>
        <taxon>Shigella</taxon>
    </lineage>
</organism>
<reference key="1">
    <citation type="journal article" date="2002" name="Nucleic Acids Res.">
        <title>Genome sequence of Shigella flexneri 2a: insights into pathogenicity through comparison with genomes of Escherichia coli K12 and O157.</title>
        <authorList>
            <person name="Jin Q."/>
            <person name="Yuan Z."/>
            <person name="Xu J."/>
            <person name="Wang Y."/>
            <person name="Shen Y."/>
            <person name="Lu W."/>
            <person name="Wang J."/>
            <person name="Liu H."/>
            <person name="Yang J."/>
            <person name="Yang F."/>
            <person name="Zhang X."/>
            <person name="Zhang J."/>
            <person name="Yang G."/>
            <person name="Wu H."/>
            <person name="Qu D."/>
            <person name="Dong J."/>
            <person name="Sun L."/>
            <person name="Xue Y."/>
            <person name="Zhao A."/>
            <person name="Gao Y."/>
            <person name="Zhu J."/>
            <person name="Kan B."/>
            <person name="Ding K."/>
            <person name="Chen S."/>
            <person name="Cheng H."/>
            <person name="Yao Z."/>
            <person name="He B."/>
            <person name="Chen R."/>
            <person name="Ma D."/>
            <person name="Qiang B."/>
            <person name="Wen Y."/>
            <person name="Hou Y."/>
            <person name="Yu J."/>
        </authorList>
    </citation>
    <scope>NUCLEOTIDE SEQUENCE [LARGE SCALE GENOMIC DNA]</scope>
    <source>
        <strain>301 / Serotype 2a</strain>
    </source>
</reference>
<reference key="2">
    <citation type="journal article" date="2003" name="Infect. Immun.">
        <title>Complete genome sequence and comparative genomics of Shigella flexneri serotype 2a strain 2457T.</title>
        <authorList>
            <person name="Wei J."/>
            <person name="Goldberg M.B."/>
            <person name="Burland V."/>
            <person name="Venkatesan M.M."/>
            <person name="Deng W."/>
            <person name="Fournier G."/>
            <person name="Mayhew G.F."/>
            <person name="Plunkett G. III"/>
            <person name="Rose D.J."/>
            <person name="Darling A."/>
            <person name="Mau B."/>
            <person name="Perna N.T."/>
            <person name="Payne S.M."/>
            <person name="Runyen-Janecky L.J."/>
            <person name="Zhou S."/>
            <person name="Schwartz D.C."/>
            <person name="Blattner F.R."/>
        </authorList>
    </citation>
    <scope>NUCLEOTIDE SEQUENCE [LARGE SCALE GENOMIC DNA]</scope>
    <source>
        <strain>ATCC 700930 / 2457T / Serotype 2a</strain>
    </source>
</reference>
<accession>P0AFF9</accession>
<accession>P03003</accession>
<gene>
    <name evidence="1" type="primary">nusA</name>
    <name type="ordered locus">SF3210</name>
    <name type="ordered locus">S3427</name>
</gene>
<evidence type="ECO:0000255" key="1">
    <source>
        <dbReference type="HAMAP-Rule" id="MF_00945"/>
    </source>
</evidence>
<name>NUSA_SHIFL</name>